<sequence>MDLTLLWVLLPLVTTAWGQYGGYGYPYQQYQDYGDDGWVNLNRQGFSYQCPHGQVVVAVRSIFSKKEGSDRQWNYACMPTPQSLGEPTECWWEEINRAGMEWYQKCSNNGLVAGFQSRYFESVLDREWQFYCCRYSKRCPYSCWMTTEYPSHYGEDMDMISYDYDFYMRGATTTFSAVERDRQWKFIMCRMTDYDCEFENV</sequence>
<feature type="signal peptide" evidence="1">
    <location>
        <begin position="1"/>
        <end position="18"/>
    </location>
</feature>
<feature type="chain" id="PRO_0000007369" description="Dermatopontin">
    <location>
        <begin position="19"/>
        <end position="201"/>
    </location>
</feature>
<feature type="repeat" description="1-1">
    <location>
        <begin position="26"/>
        <end position="79"/>
    </location>
</feature>
<feature type="repeat" description="2-1">
    <location>
        <begin position="70"/>
        <end position="75"/>
    </location>
</feature>
<feature type="repeat" description="1-2">
    <location>
        <begin position="80"/>
        <end position="135"/>
    </location>
</feature>
<feature type="repeat" description="2-2">
    <location>
        <begin position="125"/>
        <end position="130"/>
    </location>
</feature>
<feature type="repeat" description="2-3">
    <location>
        <begin position="181"/>
        <end position="186"/>
    </location>
</feature>
<feature type="region of interest" description="2 X 53-55 AA tandem repeats">
    <location>
        <begin position="19"/>
        <end position="186"/>
    </location>
</feature>
<feature type="region of interest" description="3 X 6 AA tandem repeats of D-R-[EQ]-W-[NQK]-[FY]">
    <location>
        <begin position="70"/>
        <end position="186"/>
    </location>
</feature>
<feature type="modified residue" description="Pyrrolidone carboxylic acid" evidence="2">
    <location>
        <position position="19"/>
    </location>
</feature>
<feature type="modified residue" description="Sulfotyrosine" evidence="3">
    <location>
        <position position="23"/>
    </location>
</feature>
<feature type="modified residue" description="Sulfotyrosine" evidence="3">
    <location>
        <position position="162"/>
    </location>
</feature>
<feature type="modified residue" description="Sulfotyrosine" evidence="3">
    <location>
        <position position="164"/>
    </location>
</feature>
<feature type="modified residue" description="Sulfotyrosine" evidence="3">
    <location>
        <position position="167"/>
    </location>
</feature>
<feature type="modified residue" description="Sulfotyrosine" evidence="3">
    <location>
        <position position="194"/>
    </location>
</feature>
<feature type="disulfide bond" evidence="1">
    <location>
        <begin position="50"/>
        <end position="77"/>
    </location>
</feature>
<feature type="disulfide bond" description="Or C-90 with C-133" evidence="1">
    <location>
        <begin position="90"/>
        <end position="132"/>
    </location>
</feature>
<feature type="disulfide bond" description="Or C-106 with C-132" evidence="1">
    <location>
        <begin position="106"/>
        <end position="133"/>
    </location>
</feature>
<feature type="disulfide bond" evidence="1">
    <location>
        <begin position="139"/>
        <end position="196"/>
    </location>
</feature>
<feature type="disulfide bond" evidence="3">
    <location>
        <begin position="143"/>
        <end position="189"/>
    </location>
</feature>
<feature type="sequence conflict" description="In Ref. 2; BAB31905." evidence="6" ref="2">
    <original>S</original>
    <variation>T</variation>
    <location>
        <position position="64"/>
    </location>
</feature>
<protein>
    <recommendedName>
        <fullName>Dermatopontin</fullName>
    </recommendedName>
    <alternativeName>
        <fullName>Early quiescence protein 1</fullName>
        <shortName>EQ-1</shortName>
    </alternativeName>
    <alternativeName>
        <fullName>Tyrosine-rich acidic matrix protein</fullName>
        <shortName>TRAMP</shortName>
    </alternativeName>
</protein>
<accession>Q9QZZ6</accession>
<accession>Q9D2B6</accession>
<reference key="1">
    <citation type="journal article" date="2004" name="Exp. Cell Res.">
        <title>Cloning of murine early quiescence-1 gene: the murine counterpart of dermatopontin gene can induce and be induced by cell quiescence.</title>
        <authorList>
            <person name="Tzen C.-Y."/>
            <person name="Huang Y.-W."/>
        </authorList>
    </citation>
    <scope>NUCLEOTIDE SEQUENCE [MRNA]</scope>
    <scope>FUNCTION</scope>
    <scope>INDUCTION</scope>
    <source>
        <strain>BALB/cJ</strain>
        <tissue>Mesenchymal stem cell</tissue>
    </source>
</reference>
<reference key="2">
    <citation type="journal article" date="2005" name="Science">
        <title>The transcriptional landscape of the mammalian genome.</title>
        <authorList>
            <person name="Carninci P."/>
            <person name="Kasukawa T."/>
            <person name="Katayama S."/>
            <person name="Gough J."/>
            <person name="Frith M.C."/>
            <person name="Maeda N."/>
            <person name="Oyama R."/>
            <person name="Ravasi T."/>
            <person name="Lenhard B."/>
            <person name="Wells C."/>
            <person name="Kodzius R."/>
            <person name="Shimokawa K."/>
            <person name="Bajic V.B."/>
            <person name="Brenner S.E."/>
            <person name="Batalov S."/>
            <person name="Forrest A.R."/>
            <person name="Zavolan M."/>
            <person name="Davis M.J."/>
            <person name="Wilming L.G."/>
            <person name="Aidinis V."/>
            <person name="Allen J.E."/>
            <person name="Ambesi-Impiombato A."/>
            <person name="Apweiler R."/>
            <person name="Aturaliya R.N."/>
            <person name="Bailey T.L."/>
            <person name="Bansal M."/>
            <person name="Baxter L."/>
            <person name="Beisel K.W."/>
            <person name="Bersano T."/>
            <person name="Bono H."/>
            <person name="Chalk A.M."/>
            <person name="Chiu K.P."/>
            <person name="Choudhary V."/>
            <person name="Christoffels A."/>
            <person name="Clutterbuck D.R."/>
            <person name="Crowe M.L."/>
            <person name="Dalla E."/>
            <person name="Dalrymple B.P."/>
            <person name="de Bono B."/>
            <person name="Della Gatta G."/>
            <person name="di Bernardo D."/>
            <person name="Down T."/>
            <person name="Engstrom P."/>
            <person name="Fagiolini M."/>
            <person name="Faulkner G."/>
            <person name="Fletcher C.F."/>
            <person name="Fukushima T."/>
            <person name="Furuno M."/>
            <person name="Futaki S."/>
            <person name="Gariboldi M."/>
            <person name="Georgii-Hemming P."/>
            <person name="Gingeras T.R."/>
            <person name="Gojobori T."/>
            <person name="Green R.E."/>
            <person name="Gustincich S."/>
            <person name="Harbers M."/>
            <person name="Hayashi Y."/>
            <person name="Hensch T.K."/>
            <person name="Hirokawa N."/>
            <person name="Hill D."/>
            <person name="Huminiecki L."/>
            <person name="Iacono M."/>
            <person name="Ikeo K."/>
            <person name="Iwama A."/>
            <person name="Ishikawa T."/>
            <person name="Jakt M."/>
            <person name="Kanapin A."/>
            <person name="Katoh M."/>
            <person name="Kawasawa Y."/>
            <person name="Kelso J."/>
            <person name="Kitamura H."/>
            <person name="Kitano H."/>
            <person name="Kollias G."/>
            <person name="Krishnan S.P."/>
            <person name="Kruger A."/>
            <person name="Kummerfeld S.K."/>
            <person name="Kurochkin I.V."/>
            <person name="Lareau L.F."/>
            <person name="Lazarevic D."/>
            <person name="Lipovich L."/>
            <person name="Liu J."/>
            <person name="Liuni S."/>
            <person name="McWilliam S."/>
            <person name="Madan Babu M."/>
            <person name="Madera M."/>
            <person name="Marchionni L."/>
            <person name="Matsuda H."/>
            <person name="Matsuzawa S."/>
            <person name="Miki H."/>
            <person name="Mignone F."/>
            <person name="Miyake S."/>
            <person name="Morris K."/>
            <person name="Mottagui-Tabar S."/>
            <person name="Mulder N."/>
            <person name="Nakano N."/>
            <person name="Nakauchi H."/>
            <person name="Ng P."/>
            <person name="Nilsson R."/>
            <person name="Nishiguchi S."/>
            <person name="Nishikawa S."/>
            <person name="Nori F."/>
            <person name="Ohara O."/>
            <person name="Okazaki Y."/>
            <person name="Orlando V."/>
            <person name="Pang K.C."/>
            <person name="Pavan W.J."/>
            <person name="Pavesi G."/>
            <person name="Pesole G."/>
            <person name="Petrovsky N."/>
            <person name="Piazza S."/>
            <person name="Reed J."/>
            <person name="Reid J.F."/>
            <person name="Ring B.Z."/>
            <person name="Ringwald M."/>
            <person name="Rost B."/>
            <person name="Ruan Y."/>
            <person name="Salzberg S.L."/>
            <person name="Sandelin A."/>
            <person name="Schneider C."/>
            <person name="Schoenbach C."/>
            <person name="Sekiguchi K."/>
            <person name="Semple C.A."/>
            <person name="Seno S."/>
            <person name="Sessa L."/>
            <person name="Sheng Y."/>
            <person name="Shibata Y."/>
            <person name="Shimada H."/>
            <person name="Shimada K."/>
            <person name="Silva D."/>
            <person name="Sinclair B."/>
            <person name="Sperling S."/>
            <person name="Stupka E."/>
            <person name="Sugiura K."/>
            <person name="Sultana R."/>
            <person name="Takenaka Y."/>
            <person name="Taki K."/>
            <person name="Tammoja K."/>
            <person name="Tan S.L."/>
            <person name="Tang S."/>
            <person name="Taylor M.S."/>
            <person name="Tegner J."/>
            <person name="Teichmann S.A."/>
            <person name="Ueda H.R."/>
            <person name="van Nimwegen E."/>
            <person name="Verardo R."/>
            <person name="Wei C.L."/>
            <person name="Yagi K."/>
            <person name="Yamanishi H."/>
            <person name="Zabarovsky E."/>
            <person name="Zhu S."/>
            <person name="Zimmer A."/>
            <person name="Hide W."/>
            <person name="Bult C."/>
            <person name="Grimmond S.M."/>
            <person name="Teasdale R.D."/>
            <person name="Liu E.T."/>
            <person name="Brusic V."/>
            <person name="Quackenbush J."/>
            <person name="Wahlestedt C."/>
            <person name="Mattick J.S."/>
            <person name="Hume D.A."/>
            <person name="Kai C."/>
            <person name="Sasaki D."/>
            <person name="Tomaru Y."/>
            <person name="Fukuda S."/>
            <person name="Kanamori-Katayama M."/>
            <person name="Suzuki M."/>
            <person name="Aoki J."/>
            <person name="Arakawa T."/>
            <person name="Iida J."/>
            <person name="Imamura K."/>
            <person name="Itoh M."/>
            <person name="Kato T."/>
            <person name="Kawaji H."/>
            <person name="Kawagashira N."/>
            <person name="Kawashima T."/>
            <person name="Kojima M."/>
            <person name="Kondo S."/>
            <person name="Konno H."/>
            <person name="Nakano K."/>
            <person name="Ninomiya N."/>
            <person name="Nishio T."/>
            <person name="Okada M."/>
            <person name="Plessy C."/>
            <person name="Shibata K."/>
            <person name="Shiraki T."/>
            <person name="Suzuki S."/>
            <person name="Tagami M."/>
            <person name="Waki K."/>
            <person name="Watahiki A."/>
            <person name="Okamura-Oho Y."/>
            <person name="Suzuki H."/>
            <person name="Kawai J."/>
            <person name="Hayashizaki Y."/>
        </authorList>
    </citation>
    <scope>NUCLEOTIDE SEQUENCE [LARGE SCALE MRNA]</scope>
    <source>
        <strain>C57BL/6J</strain>
        <tissue>Ovary</tissue>
        <tissue>Uterus</tissue>
    </source>
</reference>
<reference key="3">
    <citation type="journal article" date="2004" name="Genome Res.">
        <title>The status, quality, and expansion of the NIH full-length cDNA project: the Mammalian Gene Collection (MGC).</title>
        <authorList>
            <consortium name="The MGC Project Team"/>
        </authorList>
    </citation>
    <scope>NUCLEOTIDE SEQUENCE [LARGE SCALE MRNA]</scope>
    <source>
        <strain>FVB/N</strain>
        <tissue>Salivary gland</tissue>
    </source>
</reference>
<reference key="4">
    <citation type="journal article" date="2002" name="J. Invest. Dermatol.">
        <title>Targeted disruption of dermatopontin causes abnormal collagen fibrillogenesis.</title>
        <authorList>
            <person name="Takeda U."/>
            <person name="Utani A."/>
            <person name="Wu J."/>
            <person name="Adachi E."/>
            <person name="Koseki H."/>
            <person name="Taniguchi M."/>
            <person name="Matsumoto T."/>
            <person name="Ohashi T."/>
            <person name="Sato M."/>
            <person name="Shinkai H."/>
        </authorList>
    </citation>
    <scope>FUNCTION</scope>
    <scope>DISRUPTION PHENOTYPE</scope>
</reference>
<reference key="5">
    <citation type="journal article" date="2010" name="Cell">
        <title>A tissue-specific atlas of mouse protein phosphorylation and expression.</title>
        <authorList>
            <person name="Huttlin E.L."/>
            <person name="Jedrychowski M.P."/>
            <person name="Elias J.E."/>
            <person name="Goswami T."/>
            <person name="Rad R."/>
            <person name="Beausoleil S.A."/>
            <person name="Villen J."/>
            <person name="Haas W."/>
            <person name="Sowa M.E."/>
            <person name="Gygi S.P."/>
        </authorList>
    </citation>
    <scope>IDENTIFICATION BY MASS SPECTROMETRY [LARGE SCALE ANALYSIS]</scope>
    <source>
        <tissue>Lung</tissue>
    </source>
</reference>
<dbReference type="EMBL" id="AF143374">
    <property type="protein sequence ID" value="AAD54221.1"/>
    <property type="molecule type" value="mRNA"/>
</dbReference>
<dbReference type="EMBL" id="AK019890">
    <property type="protein sequence ID" value="BAB31905.1"/>
    <property type="molecule type" value="mRNA"/>
</dbReference>
<dbReference type="EMBL" id="BC046420">
    <property type="protein sequence ID" value="AAH46420.1"/>
    <property type="molecule type" value="mRNA"/>
</dbReference>
<dbReference type="CCDS" id="CCDS15437.1"/>
<dbReference type="RefSeq" id="NP_062733.1">
    <property type="nucleotide sequence ID" value="NM_019759.3"/>
</dbReference>
<dbReference type="FunCoup" id="Q9QZZ6">
    <property type="interactions" value="95"/>
</dbReference>
<dbReference type="STRING" id="10090.ENSMUSP00000027861"/>
<dbReference type="GlyGen" id="Q9QZZ6">
    <property type="glycosylation" value="1 site"/>
</dbReference>
<dbReference type="PhosphoSitePlus" id="Q9QZZ6"/>
<dbReference type="jPOST" id="Q9QZZ6"/>
<dbReference type="PaxDb" id="10090-ENSMUSP00000027861"/>
<dbReference type="ProteomicsDB" id="277980"/>
<dbReference type="Antibodypedia" id="34354">
    <property type="antibodies" value="158 antibodies from 29 providers"/>
</dbReference>
<dbReference type="DNASU" id="56429"/>
<dbReference type="Ensembl" id="ENSMUST00000027861.6">
    <property type="protein sequence ID" value="ENSMUSP00000027861.5"/>
    <property type="gene ID" value="ENSMUSG00000026574.6"/>
</dbReference>
<dbReference type="GeneID" id="56429"/>
<dbReference type="KEGG" id="mmu:56429"/>
<dbReference type="UCSC" id="uc007diq.1">
    <property type="organism name" value="mouse"/>
</dbReference>
<dbReference type="AGR" id="MGI:1928392"/>
<dbReference type="CTD" id="1805"/>
<dbReference type="MGI" id="MGI:1928392">
    <property type="gene designation" value="Dpt"/>
</dbReference>
<dbReference type="VEuPathDB" id="HostDB:ENSMUSG00000026574"/>
<dbReference type="eggNOG" id="ENOG502RTKC">
    <property type="taxonomic scope" value="Eukaryota"/>
</dbReference>
<dbReference type="GeneTree" id="ENSGT00390000010760"/>
<dbReference type="HOGENOM" id="CLU_122082_1_0_1"/>
<dbReference type="InParanoid" id="Q9QZZ6"/>
<dbReference type="OMA" id="RAGMEWS"/>
<dbReference type="OrthoDB" id="8545119at2759"/>
<dbReference type="PhylomeDB" id="Q9QZZ6"/>
<dbReference type="TreeFam" id="TF328602"/>
<dbReference type="BioGRID-ORCS" id="56429">
    <property type="hits" value="0 hits in 78 CRISPR screens"/>
</dbReference>
<dbReference type="ChiTaRS" id="Dpt">
    <property type="organism name" value="mouse"/>
</dbReference>
<dbReference type="PRO" id="PR:Q9QZZ6"/>
<dbReference type="Proteomes" id="UP000000589">
    <property type="component" value="Chromosome 1"/>
</dbReference>
<dbReference type="RNAct" id="Q9QZZ6">
    <property type="molecule type" value="protein"/>
</dbReference>
<dbReference type="Bgee" id="ENSMUSG00000026574">
    <property type="expression patterns" value="Expressed in semi-lunar valve and 163 other cell types or tissues"/>
</dbReference>
<dbReference type="GO" id="GO:0062023">
    <property type="term" value="C:collagen-containing extracellular matrix"/>
    <property type="evidence" value="ECO:0007005"/>
    <property type="project" value="BHF-UCL"/>
</dbReference>
<dbReference type="GO" id="GO:0005576">
    <property type="term" value="C:extracellular region"/>
    <property type="evidence" value="ECO:0007669"/>
    <property type="project" value="UniProtKB-KW"/>
</dbReference>
<dbReference type="GO" id="GO:0007155">
    <property type="term" value="P:cell adhesion"/>
    <property type="evidence" value="ECO:0007669"/>
    <property type="project" value="UniProtKB-KW"/>
</dbReference>
<dbReference type="GO" id="GO:0030199">
    <property type="term" value="P:collagen fibril organization"/>
    <property type="evidence" value="ECO:0000315"/>
    <property type="project" value="MGI"/>
</dbReference>
<dbReference type="GO" id="GO:0008285">
    <property type="term" value="P:negative regulation of cell population proliferation"/>
    <property type="evidence" value="ECO:0000314"/>
    <property type="project" value="MGI"/>
</dbReference>
<dbReference type="InterPro" id="IPR026645">
    <property type="entry name" value="Dermatopontin"/>
</dbReference>
<dbReference type="PANTHER" id="PTHR15040:SF2">
    <property type="entry name" value="DERMATOPONTIN"/>
    <property type="match status" value="1"/>
</dbReference>
<dbReference type="PANTHER" id="PTHR15040">
    <property type="entry name" value="DERMATOPONTIN-RELATED"/>
    <property type="match status" value="1"/>
</dbReference>
<dbReference type="Pfam" id="PF14704">
    <property type="entry name" value="DERM"/>
    <property type="match status" value="1"/>
</dbReference>
<comment type="function">
    <text evidence="1 4 5">Seems to mediate adhesion by cell surface integrin binding. May serve as a communication link between the dermal fibroblast cell surface and its extracellular matrix environment. Enhances TGFB1 activity (By similarity). Inhibits cell proliferation. Accelerates collagen fibril formation, and stabilizes collagen fibrils against low-temperature dissociation.</text>
</comment>
<comment type="subunit">
    <text evidence="1">Interacts with TGFB1, DCN and collagen.</text>
</comment>
<comment type="subcellular location">
    <subcellularLocation>
        <location evidence="1">Secreted</location>
        <location evidence="1">Extracellular space</location>
        <location evidence="1">Extracellular matrix</location>
    </subcellularLocation>
</comment>
<comment type="induction">
    <text evidence="5">Induced by cell quiescence.</text>
</comment>
<comment type="PTM">
    <text evidence="1">Sulfated on tyrosine residue(s).</text>
</comment>
<comment type="disruption phenotype">
    <text evidence="4">Mice have reduced skin elasticity, a decrease in skin-thickness, and lower collagen content in the skin.</text>
</comment>
<comment type="similarity">
    <text evidence="6">Belongs to the dermatopontin family.</text>
</comment>
<evidence type="ECO:0000250" key="1"/>
<evidence type="ECO:0000250" key="2">
    <source>
        <dbReference type="UniProtKB" id="P19427"/>
    </source>
</evidence>
<evidence type="ECO:0000255" key="3"/>
<evidence type="ECO:0000269" key="4">
    <source>
    </source>
</evidence>
<evidence type="ECO:0000269" key="5">
    <source>
    </source>
</evidence>
<evidence type="ECO:0000305" key="6"/>
<name>DERM_MOUSE</name>
<organism>
    <name type="scientific">Mus musculus</name>
    <name type="common">Mouse</name>
    <dbReference type="NCBI Taxonomy" id="10090"/>
    <lineage>
        <taxon>Eukaryota</taxon>
        <taxon>Metazoa</taxon>
        <taxon>Chordata</taxon>
        <taxon>Craniata</taxon>
        <taxon>Vertebrata</taxon>
        <taxon>Euteleostomi</taxon>
        <taxon>Mammalia</taxon>
        <taxon>Eutheria</taxon>
        <taxon>Euarchontoglires</taxon>
        <taxon>Glires</taxon>
        <taxon>Rodentia</taxon>
        <taxon>Myomorpha</taxon>
        <taxon>Muroidea</taxon>
        <taxon>Muridae</taxon>
        <taxon>Murinae</taxon>
        <taxon>Mus</taxon>
        <taxon>Mus</taxon>
    </lineage>
</organism>
<proteinExistence type="evidence at protein level"/>
<gene>
    <name type="primary">Dpt</name>
</gene>
<keyword id="KW-0130">Cell adhesion</keyword>
<keyword id="KW-1015">Disulfide bond</keyword>
<keyword id="KW-0272">Extracellular matrix</keyword>
<keyword id="KW-0873">Pyrrolidone carboxylic acid</keyword>
<keyword id="KW-1185">Reference proteome</keyword>
<keyword id="KW-0677">Repeat</keyword>
<keyword id="KW-0964">Secreted</keyword>
<keyword id="KW-0732">Signal</keyword>
<keyword id="KW-0765">Sulfation</keyword>